<comment type="function">
    <text evidence="2 3">Membrane receptor that binds the K-D-E-L sequence motif in the C-terminal part of endoplasmic reticulum resident proteins and maintains their localization in that compartment by participating to their vesicle-mediated recycling back from the Golgi (By similarity). Binding is pH dependent, and is optimal at pH 5-5.4 (By similarity).</text>
</comment>
<comment type="subcellular location">
    <subcellularLocation>
        <location evidence="2">Endoplasmic reticulum membrane</location>
        <topology evidence="3">Multi-pass membrane protein</topology>
    </subcellularLocation>
    <subcellularLocation>
        <location evidence="2">Golgi apparatus membrane</location>
        <topology evidence="3">Multi-pass membrane protein</topology>
    </subcellularLocation>
    <subcellularLocation>
        <location evidence="2">Cytoplasmic vesicle</location>
        <location evidence="2">COPI-coated vesicle membrane</location>
        <topology evidence="3">Multi-pass membrane protein</topology>
    </subcellularLocation>
    <text evidence="2">Localized in the Golgi in the absence of bound proteins with the sequence motif K-D-E-L. Trafficks back to the endoplasmic reticulum together with cargo proteins containing the sequence motif K-D-E-L.</text>
</comment>
<comment type="domain">
    <text evidence="1 3">Binds the C-terminal sequence motif K-D-E-L in a hydrophilic cavity between the transmembrane domains. This triggers a conformation change that exposes a Lys-rich patch on the cytosolic surface of the protein (By similarity). This patch mediates recycling from the Golgi to the endoplasmic reticulum, probably via COPI vesicles (By similarity).</text>
</comment>
<comment type="similarity">
    <text evidence="4">Belongs to the ERD2 family.</text>
</comment>
<reference key="1">
    <citation type="journal article" date="2004" name="Genome Res.">
        <title>The status, quality, and expansion of the NIH full-length cDNA project: the Mammalian Gene Collection (MGC).</title>
        <authorList>
            <consortium name="The MGC Project Team"/>
        </authorList>
    </citation>
    <scope>NUCLEOTIDE SEQUENCE [LARGE SCALE MRNA]</scope>
    <source>
        <tissue>Kidney</tissue>
    </source>
</reference>
<protein>
    <recommendedName>
        <fullName>ER lumen protein-retaining receptor 2</fullName>
    </recommendedName>
    <alternativeName>
        <fullName>KDEL endoplasmic reticulum protein retention receptor 2</fullName>
        <shortName>KDEL receptor 2</shortName>
    </alternativeName>
</protein>
<organism>
    <name type="scientific">Rattus norvegicus</name>
    <name type="common">Rat</name>
    <dbReference type="NCBI Taxonomy" id="10116"/>
    <lineage>
        <taxon>Eukaryota</taxon>
        <taxon>Metazoa</taxon>
        <taxon>Chordata</taxon>
        <taxon>Craniata</taxon>
        <taxon>Vertebrata</taxon>
        <taxon>Euteleostomi</taxon>
        <taxon>Mammalia</taxon>
        <taxon>Eutheria</taxon>
        <taxon>Euarchontoglires</taxon>
        <taxon>Glires</taxon>
        <taxon>Rodentia</taxon>
        <taxon>Myomorpha</taxon>
        <taxon>Muroidea</taxon>
        <taxon>Muridae</taxon>
        <taxon>Murinae</taxon>
        <taxon>Rattus</taxon>
    </lineage>
</organism>
<accession>Q5U305</accession>
<keyword id="KW-0968">Cytoplasmic vesicle</keyword>
<keyword id="KW-0256">Endoplasmic reticulum</keyword>
<keyword id="KW-0931">ER-Golgi transport</keyword>
<keyword id="KW-0333">Golgi apparatus</keyword>
<keyword id="KW-0472">Membrane</keyword>
<keyword id="KW-0653">Protein transport</keyword>
<keyword id="KW-0675">Receptor</keyword>
<keyword id="KW-1185">Reference proteome</keyword>
<keyword id="KW-0812">Transmembrane</keyword>
<keyword id="KW-1133">Transmembrane helix</keyword>
<keyword id="KW-0813">Transport</keyword>
<dbReference type="EMBL" id="BC085786">
    <property type="protein sequence ID" value="AAH85786.1"/>
    <property type="molecule type" value="mRNA"/>
</dbReference>
<dbReference type="RefSeq" id="NP_001013140.1">
    <property type="nucleotide sequence ID" value="NM_001013122.2"/>
</dbReference>
<dbReference type="SMR" id="Q5U305"/>
<dbReference type="FunCoup" id="Q5U305">
    <property type="interactions" value="1852"/>
</dbReference>
<dbReference type="STRING" id="10116.ENSRNOP00000001438"/>
<dbReference type="PhosphoSitePlus" id="Q5U305"/>
<dbReference type="PaxDb" id="10116-ENSRNOP00000001438"/>
<dbReference type="GeneID" id="304290"/>
<dbReference type="KEGG" id="rno:304290"/>
<dbReference type="AGR" id="RGD:1304618"/>
<dbReference type="CTD" id="11014"/>
<dbReference type="RGD" id="1304618">
    <property type="gene designation" value="Kdelr2"/>
</dbReference>
<dbReference type="VEuPathDB" id="HostDB:ENSRNOG00000001083"/>
<dbReference type="eggNOG" id="KOG3106">
    <property type="taxonomic scope" value="Eukaryota"/>
</dbReference>
<dbReference type="HOGENOM" id="CLU_057784_0_0_1"/>
<dbReference type="InParanoid" id="Q5U305"/>
<dbReference type="OrthoDB" id="14090at9989"/>
<dbReference type="PhylomeDB" id="Q5U305"/>
<dbReference type="Reactome" id="R-RNO-6807878">
    <property type="pathway name" value="COPI-mediated anterograde transport"/>
</dbReference>
<dbReference type="Reactome" id="R-RNO-6811434">
    <property type="pathway name" value="COPI-dependent Golgi-to-ER retrograde traffic"/>
</dbReference>
<dbReference type="PRO" id="PR:Q5U305"/>
<dbReference type="Proteomes" id="UP000002494">
    <property type="component" value="Chromosome 12"/>
</dbReference>
<dbReference type="Bgee" id="ENSRNOG00000001083">
    <property type="expression patterns" value="Expressed in jejunum and 20 other cell types or tissues"/>
</dbReference>
<dbReference type="GO" id="GO:0005801">
    <property type="term" value="C:cis-Golgi network"/>
    <property type="evidence" value="ECO:0000314"/>
    <property type="project" value="MGI"/>
</dbReference>
<dbReference type="GO" id="GO:0030663">
    <property type="term" value="C:COPI-coated vesicle membrane"/>
    <property type="evidence" value="ECO:0000266"/>
    <property type="project" value="RGD"/>
</dbReference>
<dbReference type="GO" id="GO:0005783">
    <property type="term" value="C:endoplasmic reticulum"/>
    <property type="evidence" value="ECO:0000314"/>
    <property type="project" value="MGI"/>
</dbReference>
<dbReference type="GO" id="GO:0005789">
    <property type="term" value="C:endoplasmic reticulum membrane"/>
    <property type="evidence" value="ECO:0000250"/>
    <property type="project" value="UniProtKB"/>
</dbReference>
<dbReference type="GO" id="GO:0000139">
    <property type="term" value="C:Golgi membrane"/>
    <property type="evidence" value="ECO:0000250"/>
    <property type="project" value="UniProtKB"/>
</dbReference>
<dbReference type="GO" id="GO:0016020">
    <property type="term" value="C:membrane"/>
    <property type="evidence" value="ECO:0000250"/>
    <property type="project" value="UniProtKB"/>
</dbReference>
<dbReference type="GO" id="GO:0046923">
    <property type="term" value="F:ER retention sequence binding"/>
    <property type="evidence" value="ECO:0000318"/>
    <property type="project" value="GO_Central"/>
</dbReference>
<dbReference type="GO" id="GO:0005046">
    <property type="term" value="F:KDEL sequence binding"/>
    <property type="evidence" value="ECO:0000250"/>
    <property type="project" value="UniProtKB"/>
</dbReference>
<dbReference type="GO" id="GO:0035437">
    <property type="term" value="P:maintenance of protein localization in endoplasmic reticulum"/>
    <property type="evidence" value="ECO:0000250"/>
    <property type="project" value="UniProtKB"/>
</dbReference>
<dbReference type="GO" id="GO:0006621">
    <property type="term" value="P:protein retention in ER lumen"/>
    <property type="evidence" value="ECO:0000318"/>
    <property type="project" value="GO_Central"/>
</dbReference>
<dbReference type="GO" id="GO:0015031">
    <property type="term" value="P:protein transport"/>
    <property type="evidence" value="ECO:0007669"/>
    <property type="project" value="UniProtKB-KW"/>
</dbReference>
<dbReference type="GO" id="GO:0006890">
    <property type="term" value="P:retrograde vesicle-mediated transport, Golgi to endoplasmic reticulum"/>
    <property type="evidence" value="ECO:0000250"/>
    <property type="project" value="UniProtKB"/>
</dbReference>
<dbReference type="InterPro" id="IPR000133">
    <property type="entry name" value="ER_ret_rcpt"/>
</dbReference>
<dbReference type="PANTHER" id="PTHR10585">
    <property type="entry name" value="ER LUMEN PROTEIN RETAINING RECEPTOR"/>
    <property type="match status" value="1"/>
</dbReference>
<dbReference type="Pfam" id="PF00810">
    <property type="entry name" value="ER_lumen_recept"/>
    <property type="match status" value="1"/>
</dbReference>
<dbReference type="PRINTS" id="PR00660">
    <property type="entry name" value="ERLUMENR"/>
</dbReference>
<dbReference type="PROSITE" id="PS00951">
    <property type="entry name" value="ER_LUMEN_RECEPTOR_1"/>
    <property type="match status" value="1"/>
</dbReference>
<dbReference type="PROSITE" id="PS00952">
    <property type="entry name" value="ER_LUMEN_RECEPTOR_2"/>
    <property type="match status" value="1"/>
</dbReference>
<evidence type="ECO:0000250" key="1">
    <source>
        <dbReference type="UniProtKB" id="P24390"/>
    </source>
</evidence>
<evidence type="ECO:0000250" key="2">
    <source>
        <dbReference type="UniProtKB" id="P33947"/>
    </source>
</evidence>
<evidence type="ECO:0000250" key="3">
    <source>
        <dbReference type="UniProtKB" id="Q5ZKX9"/>
    </source>
</evidence>
<evidence type="ECO:0000305" key="4"/>
<proteinExistence type="evidence at transcript level"/>
<feature type="chain" id="PRO_0000194157" description="ER lumen protein-retaining receptor 2">
    <location>
        <begin position="1"/>
        <end position="212"/>
    </location>
</feature>
<feature type="topological domain" description="Lumenal" evidence="4">
    <location>
        <begin position="1"/>
        <end position="4"/>
    </location>
</feature>
<feature type="transmembrane region" description="Helical" evidence="3">
    <location>
        <begin position="5"/>
        <end position="24"/>
    </location>
</feature>
<feature type="topological domain" description="Cytoplasmic" evidence="4">
    <location>
        <begin position="25"/>
        <end position="32"/>
    </location>
</feature>
<feature type="transmembrane region" description="Helical" evidence="3">
    <location>
        <begin position="33"/>
        <end position="52"/>
    </location>
</feature>
<feature type="topological domain" description="Lumenal" evidence="4">
    <location>
        <begin position="53"/>
        <end position="58"/>
    </location>
</feature>
<feature type="transmembrane region" description="Helical" evidence="3">
    <location>
        <begin position="59"/>
        <end position="79"/>
    </location>
</feature>
<feature type="topological domain" description="Cytoplasmic" evidence="4">
    <location>
        <begin position="80"/>
        <end position="92"/>
    </location>
</feature>
<feature type="transmembrane region" description="Helical" evidence="3">
    <location>
        <begin position="93"/>
        <end position="110"/>
    </location>
</feature>
<feature type="topological domain" description="Lumenal" evidence="4">
    <location>
        <begin position="111"/>
        <end position="116"/>
    </location>
</feature>
<feature type="transmembrane region" description="Helical" evidence="3">
    <location>
        <begin position="117"/>
        <end position="135"/>
    </location>
</feature>
<feature type="topological domain" description="Cytoplasmic" evidence="4">
    <location>
        <begin position="136"/>
        <end position="149"/>
    </location>
</feature>
<feature type="transmembrane region" description="Helical" evidence="3">
    <location>
        <begin position="150"/>
        <end position="168"/>
    </location>
</feature>
<feature type="topological domain" description="Lumenal" evidence="4">
    <location>
        <begin position="169"/>
        <end position="178"/>
    </location>
</feature>
<feature type="transmembrane region" description="Helical" evidence="3">
    <location>
        <begin position="179"/>
        <end position="199"/>
    </location>
</feature>
<feature type="topological domain" description="Cytoplasmic" evidence="4">
    <location>
        <begin position="200"/>
        <end position="212"/>
    </location>
</feature>
<feature type="region of interest" description="Interaction with the K-D-E-L motif on target proteins" evidence="3">
    <location>
        <begin position="47"/>
        <end position="48"/>
    </location>
</feature>
<feature type="region of interest" description="Interaction with the K-D-E-L motif on target proteins" evidence="3">
    <location>
        <begin position="159"/>
        <end position="169"/>
    </location>
</feature>
<feature type="region of interest" description="Important for recycling of cargo proteins with the sequence motif K-D-E-L from the Golgi to the endoplasmic reticulum" evidence="1">
    <location>
        <begin position="204"/>
        <end position="207"/>
    </location>
</feature>
<feature type="site" description="Interaction with the K-D-E-L motif on target proteins" evidence="3">
    <location>
        <position position="5"/>
    </location>
</feature>
<feature type="site" description="Interaction with the K-D-E-L motif on target proteins" evidence="3">
    <location>
        <position position="54"/>
    </location>
</feature>
<feature type="site" description="Interaction with the K-D-E-L motif on target proteins" evidence="3">
    <location>
        <position position="117"/>
    </location>
</feature>
<feature type="site" description="Important for recycling of cargo proteins with the sequence motif K-D-E-L from the Golgi to the endoplasmic reticulum" evidence="1">
    <location>
        <position position="193"/>
    </location>
</feature>
<gene>
    <name type="primary">Kdelr2</name>
</gene>
<sequence>MNIFRLTGDLSHLAAIVILLLKIWKTRSCAGISGKSQLLFALVFTTRYLDLFTSFISLYNTSMKLIYIACSYATVYLIYMKFKATYDGNHDTFRVEFLVVPVGGLSFLVNHDFSPLEILWTFSIYLESVAILPQLFMISKTGEAETITTHYLFFLGLYRALYLVNWIWRFYFEGFFDLIAVVAGVVQTILYCDFFYLYITKVLKGKKLSLPA</sequence>
<name>ERD22_RAT</name>